<evidence type="ECO:0000250" key="1">
    <source>
        <dbReference type="UniProtKB" id="P16580"/>
    </source>
</evidence>
<evidence type="ECO:0000255" key="2">
    <source>
        <dbReference type="PROSITE-ProRule" id="PRU01330"/>
    </source>
</evidence>
<evidence type="ECO:0000255" key="3">
    <source>
        <dbReference type="PROSITE-ProRule" id="PRU01331"/>
    </source>
</evidence>
<evidence type="ECO:0000269" key="4">
    <source>
    </source>
</evidence>
<evidence type="ECO:0000269" key="5">
    <source>
    </source>
</evidence>
<evidence type="ECO:0000269" key="6">
    <source>
    </source>
</evidence>
<evidence type="ECO:0000269" key="7">
    <source>
    </source>
</evidence>
<evidence type="ECO:0000269" key="8">
    <source>
    </source>
</evidence>
<evidence type="ECO:0000269" key="9">
    <source>
    </source>
</evidence>
<evidence type="ECO:0000269" key="10">
    <source>
    </source>
</evidence>
<evidence type="ECO:0000269" key="11">
    <source>
    </source>
</evidence>
<evidence type="ECO:0000269" key="12">
    <source>
    </source>
</evidence>
<evidence type="ECO:0000303" key="13">
    <source>
    </source>
</evidence>
<evidence type="ECO:0000303" key="14">
    <source>
    </source>
</evidence>
<evidence type="ECO:0000303" key="15">
    <source ref="2"/>
</evidence>
<evidence type="ECO:0000305" key="16"/>
<evidence type="ECO:0000312" key="17">
    <source>
        <dbReference type="EMBL" id="BAD15892.1"/>
    </source>
</evidence>
<evidence type="ECO:0000312" key="18">
    <source>
        <dbReference type="EMBL" id="BAS80796.1"/>
    </source>
</evidence>
<evidence type="ECO:0000312" key="19">
    <source>
        <dbReference type="EMBL" id="EAZ24534.1"/>
    </source>
</evidence>
<accession>P14656</accession>
<accession>Q0DXS9</accession>
<accession>Q6Z753</accession>
<name>GLN11_ORYSJ</name>
<protein>
    <recommendedName>
        <fullName evidence="16">Glutamine synthetase cytosolic isozyme 1-1</fullName>
        <ecNumber evidence="5">6.3.1.2</ecNumber>
    </recommendedName>
    <alternativeName>
        <fullName evidence="16">Glutamate--ammonia ligase GLN1;1</fullName>
        <shortName evidence="13">OsGLN1;1</shortName>
    </alternativeName>
    <alternativeName>
        <fullName evidence="16">Glutamine synthetase shoot isozyme</fullName>
    </alternativeName>
    <alternativeName>
        <fullName evidence="15">OsGS1;1</fullName>
    </alternativeName>
</protein>
<proteinExistence type="evidence at protein level"/>
<organism>
    <name type="scientific">Oryza sativa subsp. japonica</name>
    <name type="common">Rice</name>
    <dbReference type="NCBI Taxonomy" id="39947"/>
    <lineage>
        <taxon>Eukaryota</taxon>
        <taxon>Viridiplantae</taxon>
        <taxon>Streptophyta</taxon>
        <taxon>Embryophyta</taxon>
        <taxon>Tracheophyta</taxon>
        <taxon>Spermatophyta</taxon>
        <taxon>Magnoliopsida</taxon>
        <taxon>Liliopsida</taxon>
        <taxon>Poales</taxon>
        <taxon>Poaceae</taxon>
        <taxon>BOP clade</taxon>
        <taxon>Oryzoideae</taxon>
        <taxon>Oryzeae</taxon>
        <taxon>Oryzinae</taxon>
        <taxon>Oryza</taxon>
        <taxon>Oryza sativa</taxon>
    </lineage>
</organism>
<comment type="function">
    <text evidence="6 8 11 12">High-affinity glutamine synthetase involved in ammonium assimilation (PubMed:15918879, PubMed:21255162). Seems to be a major component of the cytosolic glutamine synthetic pathway in leaf blades (PubMed:15918879, PubMed:21255162). Plays an important role in maintaining carbon and nitrogen metabolic balance during ammonium assimilation in shoots and roots, thus controlling plant growth and development (PubMed:21255162, PubMed:24743556). Plays an important role in maintaining broad range of metabolites and transcripts involved in the maintenance of plant metabolic homeostasis and development of plastid in roots (PubMed:32024696).</text>
</comment>
<comment type="catalytic activity">
    <reaction evidence="5">
        <text>L-glutamate + NH4(+) + ATP = L-glutamine + ADP + phosphate + H(+)</text>
        <dbReference type="Rhea" id="RHEA:16169"/>
        <dbReference type="ChEBI" id="CHEBI:15378"/>
        <dbReference type="ChEBI" id="CHEBI:28938"/>
        <dbReference type="ChEBI" id="CHEBI:29985"/>
        <dbReference type="ChEBI" id="CHEBI:30616"/>
        <dbReference type="ChEBI" id="CHEBI:43474"/>
        <dbReference type="ChEBI" id="CHEBI:58359"/>
        <dbReference type="ChEBI" id="CHEBI:456216"/>
        <dbReference type="EC" id="6.3.1.2"/>
    </reaction>
    <physiologicalReaction direction="left-to-right" evidence="5">
        <dbReference type="Rhea" id="RHEA:16170"/>
    </physiologicalReaction>
</comment>
<comment type="biophysicochemical properties">
    <kinetics>
        <KM evidence="5">1.9 mM for glutamate</KM>
        <KM evidence="5">27 uM for ammonium</KM>
        <KM evidence="5">450 uM for ATP</KM>
        <Vmax evidence="5">190.0 nmol/sec/mg enzyme with glutamate as substrate</Vmax>
        <Vmax evidence="5">186.3 nmol/sec/mg enzyme with ammonium as substrate</Vmax>
        <Vmax evidence="5">170.2 nmol/sec/mg enzyme with ATP as substrate</Vmax>
        <text evidence="5">Measured at pH 7.8 and 30 degrees Celsius for all experiments.</text>
    </kinetics>
</comment>
<comment type="subunit">
    <text evidence="1">Homooctamer.</text>
</comment>
<comment type="subcellular location">
    <subcellularLocation>
        <location evidence="16">Cytoplasm</location>
    </subcellularLocation>
</comment>
<comment type="tissue specificity">
    <text evidence="5 6">Highly expressed in leaf blades, at intermediate levels in spikelets (rice flower) and at lower levels in roots.</text>
</comment>
<comment type="developmental stage">
    <text evidence="4">Expressed in metaxylem and phloem of parenchyma cells and in sclerenchyma cells of developing leaf blades.</text>
</comment>
<comment type="induction">
    <text evidence="5 7 9 10">Induced in roots under nitrogen-limited condition (PubMed:15574840, PubMed:23509111). Down-regulated in roots under ammonium supply (PubMed:17350935). Down-regulated by treatment with cadmium (PubMed:23743654).</text>
</comment>
<comment type="disruption phenotype">
    <text evidence="6">Plants show marked reduction in leaf blades elongation, plant height, panicle size and grain filling.</text>
</comment>
<comment type="miscellaneous">
    <text evidence="11">Plants overexpressing GLN1-1 exhibit a poor plant growth phenotype and yield, and decreased carbon/nitrogen ratio in the stem caused by the accumulation of nitrogen in the stem.</text>
</comment>
<comment type="similarity">
    <text evidence="16">Belongs to the glutamine synthetase family.</text>
</comment>
<reference key="1">
    <citation type="journal article" date="1989" name="Plant Mol. Biol.">
        <title>Three cDNA sequences coding for glutamine synthetase polypeptides in Oryza sativa L.</title>
        <authorList>
            <person name="Sakamoto A."/>
            <person name="Ogawa M."/>
            <person name="Masumura T."/>
            <person name="Shibata D."/>
            <person name="Takeba G."/>
            <person name="Tanaka K."/>
            <person name="Fujii S."/>
        </authorList>
    </citation>
    <scope>NUCLEOTIDE SEQUENCE [MRNA]</scope>
    <source>
        <strain>cv. Kinmaze</strain>
        <tissue>Shoot</tissue>
    </source>
</reference>
<reference key="2">
    <citation type="online journal article" date="2000" name="Plant Gene Register">
        <title>Nucleotide sequence of a genomic DNA and a cDNA encoding cytosolic glutamine synthetase in Sasanishiki, a seading cultivar of rice (Oryza sativa L) in northern Japan.</title>
        <authorList>
            <person name="Kojima S."/>
            <person name="Hanzawa S."/>
            <person name="Hayakawa T."/>
            <person name="Hayashi M."/>
            <person name="Yamaya T."/>
        </authorList>
        <locator>PGR00-048</locator>
    </citation>
    <scope>NUCLEOTIDE SEQUENCE [GENOMIC DNA / MRNA]</scope>
    <source>
        <strain>cv. Sasanishiki</strain>
    </source>
</reference>
<reference key="3">
    <citation type="journal article" date="2005" name="Nature">
        <title>The map-based sequence of the rice genome.</title>
        <authorList>
            <consortium name="International rice genome sequencing project (IRGSP)"/>
        </authorList>
    </citation>
    <scope>NUCLEOTIDE SEQUENCE [LARGE SCALE GENOMIC DNA]</scope>
    <source>
        <strain>cv. Nipponbare</strain>
    </source>
</reference>
<reference key="4">
    <citation type="journal article" date="2008" name="Nucleic Acids Res.">
        <title>The rice annotation project database (RAP-DB): 2008 update.</title>
        <authorList>
            <consortium name="The rice annotation project (RAP)"/>
        </authorList>
    </citation>
    <scope>GENOME REANNOTATION</scope>
    <source>
        <strain>cv. Nipponbare</strain>
    </source>
</reference>
<reference key="5">
    <citation type="journal article" date="2013" name="Rice">
        <title>Improvement of the Oryza sativa Nipponbare reference genome using next generation sequence and optical map data.</title>
        <authorList>
            <person name="Kawahara Y."/>
            <person name="de la Bastide M."/>
            <person name="Hamilton J.P."/>
            <person name="Kanamori H."/>
            <person name="McCombie W.R."/>
            <person name="Ouyang S."/>
            <person name="Schwartz D.C."/>
            <person name="Tanaka T."/>
            <person name="Wu J."/>
            <person name="Zhou S."/>
            <person name="Childs K.L."/>
            <person name="Davidson R.M."/>
            <person name="Lin H."/>
            <person name="Quesada-Ocampo L."/>
            <person name="Vaillancourt B."/>
            <person name="Sakai H."/>
            <person name="Lee S.S."/>
            <person name="Kim J."/>
            <person name="Numa H."/>
            <person name="Itoh T."/>
            <person name="Buell C.R."/>
            <person name="Matsumoto T."/>
        </authorList>
    </citation>
    <scope>GENOME REANNOTATION</scope>
    <source>
        <strain>cv. Nipponbare</strain>
    </source>
</reference>
<reference key="6">
    <citation type="journal article" date="2005" name="PLoS Biol.">
        <title>The genomes of Oryza sativa: a history of duplications.</title>
        <authorList>
            <person name="Yu J."/>
            <person name="Wang J."/>
            <person name="Lin W."/>
            <person name="Li S."/>
            <person name="Li H."/>
            <person name="Zhou J."/>
            <person name="Ni P."/>
            <person name="Dong W."/>
            <person name="Hu S."/>
            <person name="Zeng C."/>
            <person name="Zhang J."/>
            <person name="Zhang Y."/>
            <person name="Li R."/>
            <person name="Xu Z."/>
            <person name="Li S."/>
            <person name="Li X."/>
            <person name="Zheng H."/>
            <person name="Cong L."/>
            <person name="Lin L."/>
            <person name="Yin J."/>
            <person name="Geng J."/>
            <person name="Li G."/>
            <person name="Shi J."/>
            <person name="Liu J."/>
            <person name="Lv H."/>
            <person name="Li J."/>
            <person name="Wang J."/>
            <person name="Deng Y."/>
            <person name="Ran L."/>
            <person name="Shi X."/>
            <person name="Wang X."/>
            <person name="Wu Q."/>
            <person name="Li C."/>
            <person name="Ren X."/>
            <person name="Wang J."/>
            <person name="Wang X."/>
            <person name="Li D."/>
            <person name="Liu D."/>
            <person name="Zhang X."/>
            <person name="Ji Z."/>
            <person name="Zhao W."/>
            <person name="Sun Y."/>
            <person name="Zhang Z."/>
            <person name="Bao J."/>
            <person name="Han Y."/>
            <person name="Dong L."/>
            <person name="Ji J."/>
            <person name="Chen P."/>
            <person name="Wu S."/>
            <person name="Liu J."/>
            <person name="Xiao Y."/>
            <person name="Bu D."/>
            <person name="Tan J."/>
            <person name="Yang L."/>
            <person name="Ye C."/>
            <person name="Zhang J."/>
            <person name="Xu J."/>
            <person name="Zhou Y."/>
            <person name="Yu Y."/>
            <person name="Zhang B."/>
            <person name="Zhuang S."/>
            <person name="Wei H."/>
            <person name="Liu B."/>
            <person name="Lei M."/>
            <person name="Yu H."/>
            <person name="Li Y."/>
            <person name="Xu H."/>
            <person name="Wei S."/>
            <person name="He X."/>
            <person name="Fang L."/>
            <person name="Zhang Z."/>
            <person name="Zhang Y."/>
            <person name="Huang X."/>
            <person name="Su Z."/>
            <person name="Tong W."/>
            <person name="Li J."/>
            <person name="Tong Z."/>
            <person name="Li S."/>
            <person name="Ye J."/>
            <person name="Wang L."/>
            <person name="Fang L."/>
            <person name="Lei T."/>
            <person name="Chen C.-S."/>
            <person name="Chen H.-C."/>
            <person name="Xu Z."/>
            <person name="Li H."/>
            <person name="Huang H."/>
            <person name="Zhang F."/>
            <person name="Xu H."/>
            <person name="Li N."/>
            <person name="Zhao C."/>
            <person name="Li S."/>
            <person name="Dong L."/>
            <person name="Huang Y."/>
            <person name="Li L."/>
            <person name="Xi Y."/>
            <person name="Qi Q."/>
            <person name="Li W."/>
            <person name="Zhang B."/>
            <person name="Hu W."/>
            <person name="Zhang Y."/>
            <person name="Tian X."/>
            <person name="Jiao Y."/>
            <person name="Liang X."/>
            <person name="Jin J."/>
            <person name="Gao L."/>
            <person name="Zheng W."/>
            <person name="Hao B."/>
            <person name="Liu S.-M."/>
            <person name="Wang W."/>
            <person name="Yuan L."/>
            <person name="Cao M."/>
            <person name="McDermott J."/>
            <person name="Samudrala R."/>
            <person name="Wang J."/>
            <person name="Wong G.K.-S."/>
            <person name="Yang H."/>
        </authorList>
    </citation>
    <scope>NUCLEOTIDE SEQUENCE [LARGE SCALE GENOMIC DNA]</scope>
    <source>
        <strain>cv. Nipponbare</strain>
    </source>
</reference>
<reference key="7">
    <citation type="journal article" date="2003" name="Science">
        <title>Collection, mapping, and annotation of over 28,000 cDNA clones from japonica rice.</title>
        <authorList>
            <consortium name="The rice full-length cDNA consortium"/>
        </authorList>
    </citation>
    <scope>NUCLEOTIDE SEQUENCE [LARGE SCALE MRNA]</scope>
    <source>
        <strain>cv. Nipponbare</strain>
    </source>
</reference>
<reference key="8">
    <citation type="journal article" date="2004" name="Nucleic Acids Res.">
        <title>Rice proteome database based on two-dimensional polyacrylamide gel electrophoresis: its status in 2003.</title>
        <authorList>
            <person name="Komatsu S."/>
            <person name="Kojima K."/>
            <person name="Suzuki K."/>
            <person name="Ozaki K."/>
            <person name="Higo K."/>
        </authorList>
    </citation>
    <scope>PROTEIN SEQUENCE OF 204-213</scope>
    <source>
        <strain>cv. Nipponbare</strain>
        <tissue>Callus</tissue>
    </source>
</reference>
<reference key="9">
    <citation type="journal article" date="2001" name="Physiol. Plantarum">
        <title>Overlapping expression of cytosolic glutamine synthetase and phenylalanine ammonia-lyase in immature leaf blades of rice.</title>
        <authorList>
            <person name="Sakurai N."/>
            <person name="Katayama Y."/>
            <person name="Yamaya T."/>
        </authorList>
    </citation>
    <scope>DEVELOPMENTAL STAGE</scope>
</reference>
<reference key="10">
    <citation type="journal article" date="2004" name="Plant Cell Physiol.">
        <title>Biochemical background and compartmentalized functions of cytosolic glutamine synthetase for active ammonium assimilation in rice roots.</title>
        <authorList>
            <person name="Ishiyama K."/>
            <person name="Inoue E."/>
            <person name="Tabuchi M."/>
            <person name="Yamaya T."/>
            <person name="Takahashi H."/>
        </authorList>
    </citation>
    <scope>CATALYTIC ACTIVITY</scope>
    <scope>BIOPHYSICOCHEMICAL PROPERTIES</scope>
    <scope>TISSUE SPECIFICITY</scope>
    <scope>INDUCTION</scope>
</reference>
<reference key="11">
    <citation type="journal article" date="2005" name="Plant J.">
        <title>Severe reduction in growth rate and grain filling of rice mutants lacking OsGS1;1, a cytosolic glutamine synthetase1;1.</title>
        <authorList>
            <person name="Tabuchi M."/>
            <person name="Sugiyama K."/>
            <person name="Ishiyama K."/>
            <person name="Inoue E."/>
            <person name="Sato T."/>
            <person name="Takahashi H."/>
            <person name="Yamaya T."/>
        </authorList>
    </citation>
    <scope>FUNCTION</scope>
    <scope>DISRUPTION PHENOTYPE</scope>
    <scope>TISSUE SPECIFICITY</scope>
</reference>
<reference key="12">
    <citation type="journal article" date="2007" name="J. Exp. Bot.">
        <title>Assimilation of ammonium ions and reutilization of nitrogen in rice (Oryza sativa L.).</title>
        <authorList>
            <person name="Tabuchi M."/>
            <person name="Abiko T."/>
            <person name="Yamaya T."/>
        </authorList>
    </citation>
    <scope>INDUCTION</scope>
</reference>
<reference key="13">
    <citation type="journal article" date="2011" name="Plant J.">
        <title>Metabolomics data reveal a crucial role of cytosolic glutamine synthetase 1;1 in coordinating metabolic balance in rice.</title>
        <authorList>
            <person name="Kusano M."/>
            <person name="Tabuchi M."/>
            <person name="Fukushima A."/>
            <person name="Funayama K."/>
            <person name="Diaz C."/>
            <person name="Kobayashi M."/>
            <person name="Hayashi N."/>
            <person name="Tsuchiya Y.N."/>
            <person name="Takahashi H."/>
            <person name="Kamata A."/>
            <person name="Yamaya T."/>
            <person name="Saito K."/>
        </authorList>
    </citation>
    <scope>FUNCTION</scope>
</reference>
<reference key="14">
    <citation type="journal article" date="2013" name="Plant Cell Physiol.">
        <title>Cytosolic glutamine synthetase1;2 is responsible for the primary assimilation of ammonium in rice roots.</title>
        <authorList>
            <person name="Funayama K."/>
            <person name="Kojima S."/>
            <person name="Tabuchi-Kobayashi M."/>
            <person name="Sawa Y."/>
            <person name="Nakayama Y."/>
            <person name="Hayakawa T."/>
            <person name="Yamaya T."/>
        </authorList>
    </citation>
    <scope>INDUCTION</scope>
</reference>
<reference key="15">
    <citation type="journal article" date="2013" name="Plant Cell Rep.">
        <title>Overexpression of the glutamine synthetase gene modulates oxidative stress response in rice after exposure to cadmium stress.</title>
        <authorList>
            <person name="Lee H.J."/>
            <person name="Abdula S.E."/>
            <person name="Jang D.W."/>
            <person name="Park S.H."/>
            <person name="Yoon U.H."/>
            <person name="Jung Y.J."/>
            <person name="Kang K.K."/>
            <person name="Nou I.S."/>
            <person name="Cho Y.G."/>
        </authorList>
    </citation>
    <scope>INDUCTION</scope>
</reference>
<reference key="16">
    <citation type="journal article" date="2014" name="PLoS ONE">
        <title>Accumulated expression level of cytosolic glutamine synthetase 1 gene (OsGS1;1 or OsGS1;2) alter plant development and the carbon-nitrogen metabolic status in rice.</title>
        <authorList>
            <person name="Bao A."/>
            <person name="Zhao Z."/>
            <person name="Ding G."/>
            <person name="Shi L."/>
            <person name="Xu F."/>
            <person name="Cai H."/>
        </authorList>
    </citation>
    <scope>FUNCTION</scope>
</reference>
<reference key="17">
    <citation type="journal article" date="2020" name="Plant Physiol.">
        <title>Cytosolic GLUTAMINE SYNTHETASE1;1 modulates metabolism and chloroplast development in roots.</title>
        <authorList>
            <person name="Kusano M."/>
            <person name="Fukushima A."/>
            <person name="Tabuchi-Kobayashi M."/>
            <person name="Funayama K."/>
            <person name="Kojima S."/>
            <person name="Maruyama K."/>
            <person name="Yamamoto Y.Y."/>
            <person name="Nishizawa T."/>
            <person name="Kobayashi M."/>
            <person name="Wakazaki M."/>
            <person name="Sato M."/>
            <person name="Toyooka K."/>
            <person name="Osanai-Kondo K."/>
            <person name="Utsumi Y."/>
            <person name="Seki M."/>
            <person name="Fukai C."/>
            <person name="Saito K."/>
            <person name="Yamaya T."/>
        </authorList>
    </citation>
    <scope>FUNCTION</scope>
</reference>
<gene>
    <name evidence="16" type="primary">GLN1-1</name>
    <name evidence="14" type="synonym">RGS28</name>
    <name evidence="18" type="ordered locus">Os02g0735200</name>
    <name evidence="16" type="ordered locus">LOC_Os02g50240</name>
    <name evidence="19" type="ORF">OsJ_08295</name>
    <name evidence="17" type="ORF">P0487D09.8</name>
</gene>
<dbReference type="EC" id="6.3.1.2" evidence="5"/>
<dbReference type="EMBL" id="X14245">
    <property type="protein sequence ID" value="CAA32461.1"/>
    <property type="molecule type" value="mRNA"/>
</dbReference>
<dbReference type="EMBL" id="AB037595">
    <property type="protein sequence ID" value="BAA95679.1"/>
    <property type="molecule type" value="mRNA"/>
</dbReference>
<dbReference type="EMBL" id="AB037664">
    <property type="protein sequence ID" value="BAA95678.1"/>
    <property type="molecule type" value="Genomic_DNA"/>
</dbReference>
<dbReference type="EMBL" id="AP004880">
    <property type="protein sequence ID" value="BAD15892.1"/>
    <property type="molecule type" value="Genomic_DNA"/>
</dbReference>
<dbReference type="EMBL" id="AP008208">
    <property type="protein sequence ID" value="BAF09959.1"/>
    <property type="molecule type" value="Genomic_DNA"/>
</dbReference>
<dbReference type="EMBL" id="AP014958">
    <property type="protein sequence ID" value="BAS80796.1"/>
    <property type="molecule type" value="Genomic_DNA"/>
</dbReference>
<dbReference type="EMBL" id="CM000139">
    <property type="protein sequence ID" value="EAZ24534.1"/>
    <property type="molecule type" value="Genomic_DNA"/>
</dbReference>
<dbReference type="EMBL" id="AK061157">
    <property type="protein sequence ID" value="BAG87764.1"/>
    <property type="molecule type" value="mRNA"/>
</dbReference>
<dbReference type="EMBL" id="AK104987">
    <property type="protein sequence ID" value="BAG97064.1"/>
    <property type="molecule type" value="mRNA"/>
</dbReference>
<dbReference type="PIR" id="S07470">
    <property type="entry name" value="AJRZQG"/>
</dbReference>
<dbReference type="RefSeq" id="XP_015626102.1">
    <property type="nucleotide sequence ID" value="XM_015770616.1"/>
</dbReference>
<dbReference type="SMR" id="P14656"/>
<dbReference type="FunCoup" id="P14656">
    <property type="interactions" value="2156"/>
</dbReference>
<dbReference type="IntAct" id="P14656">
    <property type="interactions" value="1"/>
</dbReference>
<dbReference type="STRING" id="39947.P14656"/>
<dbReference type="PaxDb" id="39947-P14656"/>
<dbReference type="EnsemblPlants" id="Os02t0735200-01">
    <property type="protein sequence ID" value="Os02t0735200-01"/>
    <property type="gene ID" value="Os02g0735200"/>
</dbReference>
<dbReference type="EnsemblPlants" id="Os02t0735200-02">
    <property type="protein sequence ID" value="Os02t0735200-02"/>
    <property type="gene ID" value="Os02g0735200"/>
</dbReference>
<dbReference type="EnsemblPlants" id="Os02t0735200-03">
    <property type="protein sequence ID" value="Os02t0735200-03"/>
    <property type="gene ID" value="Os02g0735200"/>
</dbReference>
<dbReference type="Gramene" id="Os02t0735200-01">
    <property type="protein sequence ID" value="Os02t0735200-01"/>
    <property type="gene ID" value="Os02g0735200"/>
</dbReference>
<dbReference type="Gramene" id="Os02t0735200-02">
    <property type="protein sequence ID" value="Os02t0735200-02"/>
    <property type="gene ID" value="Os02g0735200"/>
</dbReference>
<dbReference type="Gramene" id="Os02t0735200-03">
    <property type="protein sequence ID" value="Os02t0735200-03"/>
    <property type="gene ID" value="Os02g0735200"/>
</dbReference>
<dbReference type="KEGG" id="dosa:Os02g0735200"/>
<dbReference type="eggNOG" id="KOG0683">
    <property type="taxonomic scope" value="Eukaryota"/>
</dbReference>
<dbReference type="HOGENOM" id="CLU_036762_0_1_1"/>
<dbReference type="InParanoid" id="P14656"/>
<dbReference type="OMA" id="HAVACLY"/>
<dbReference type="OrthoDB" id="1936100at2759"/>
<dbReference type="BRENDA" id="6.3.1.2">
    <property type="organism ID" value="8948"/>
</dbReference>
<dbReference type="PlantReactome" id="R-OSA-1119291">
    <property type="pathway name" value="Nitrate assimilation"/>
</dbReference>
<dbReference type="PlantReactome" id="R-OSA-1119293">
    <property type="pathway name" value="Glutamine biosynthesis I"/>
</dbReference>
<dbReference type="PlantReactome" id="R-OSA-1119443">
    <property type="pathway name" value="Ammonia assimilation cycle"/>
</dbReference>
<dbReference type="SABIO-RK" id="P14656"/>
<dbReference type="Proteomes" id="UP000000763">
    <property type="component" value="Chromosome 2"/>
</dbReference>
<dbReference type="Proteomes" id="UP000007752">
    <property type="component" value="Chromosome 2"/>
</dbReference>
<dbReference type="Proteomes" id="UP000059680">
    <property type="component" value="Chromosome 2"/>
</dbReference>
<dbReference type="GO" id="GO:0005737">
    <property type="term" value="C:cytoplasm"/>
    <property type="evidence" value="ECO:0000318"/>
    <property type="project" value="GO_Central"/>
</dbReference>
<dbReference type="GO" id="GO:0005524">
    <property type="term" value="F:ATP binding"/>
    <property type="evidence" value="ECO:0007669"/>
    <property type="project" value="UniProtKB-KW"/>
</dbReference>
<dbReference type="GO" id="GO:0004356">
    <property type="term" value="F:glutamine synthetase activity"/>
    <property type="evidence" value="ECO:0000318"/>
    <property type="project" value="GO_Central"/>
</dbReference>
<dbReference type="GO" id="GO:0006542">
    <property type="term" value="P:glutamine biosynthetic process"/>
    <property type="evidence" value="ECO:0000318"/>
    <property type="project" value="GO_Central"/>
</dbReference>
<dbReference type="FunFam" id="3.30.590.10:FF:000004">
    <property type="entry name" value="Glutamine synthetase"/>
    <property type="match status" value="1"/>
</dbReference>
<dbReference type="FunFam" id="3.10.20.70:FF:000003">
    <property type="entry name" value="Glutamine synthetase, chloroplastic"/>
    <property type="match status" value="1"/>
</dbReference>
<dbReference type="Gene3D" id="3.10.20.70">
    <property type="entry name" value="Glutamine synthetase, N-terminal domain"/>
    <property type="match status" value="1"/>
</dbReference>
<dbReference type="Gene3D" id="3.30.590.10">
    <property type="entry name" value="Glutamine synthetase/guanido kinase, catalytic domain"/>
    <property type="match status" value="1"/>
</dbReference>
<dbReference type="InterPro" id="IPR008147">
    <property type="entry name" value="Gln_synt_N"/>
</dbReference>
<dbReference type="InterPro" id="IPR036651">
    <property type="entry name" value="Gln_synt_N_sf"/>
</dbReference>
<dbReference type="InterPro" id="IPR014746">
    <property type="entry name" value="Gln_synth/guanido_kin_cat_dom"/>
</dbReference>
<dbReference type="InterPro" id="IPR008146">
    <property type="entry name" value="Gln_synth_cat_dom"/>
</dbReference>
<dbReference type="InterPro" id="IPR027303">
    <property type="entry name" value="Gln_synth_gly_rich_site"/>
</dbReference>
<dbReference type="InterPro" id="IPR027302">
    <property type="entry name" value="Gln_synth_N_conserv_site"/>
</dbReference>
<dbReference type="InterPro" id="IPR050292">
    <property type="entry name" value="Glutamine_Synthetase"/>
</dbReference>
<dbReference type="PANTHER" id="PTHR20852">
    <property type="entry name" value="GLUTAMINE SYNTHETASE"/>
    <property type="match status" value="1"/>
</dbReference>
<dbReference type="PANTHER" id="PTHR20852:SF93">
    <property type="entry name" value="GLUTAMINE SYNTHETASE CYTOSOLIC ISOZYME 1-1"/>
    <property type="match status" value="1"/>
</dbReference>
<dbReference type="Pfam" id="PF00120">
    <property type="entry name" value="Gln-synt_C"/>
    <property type="match status" value="1"/>
</dbReference>
<dbReference type="Pfam" id="PF03951">
    <property type="entry name" value="Gln-synt_N"/>
    <property type="match status" value="1"/>
</dbReference>
<dbReference type="SMART" id="SM01230">
    <property type="entry name" value="Gln-synt_C"/>
    <property type="match status" value="1"/>
</dbReference>
<dbReference type="SUPFAM" id="SSF54368">
    <property type="entry name" value="Glutamine synthetase, N-terminal domain"/>
    <property type="match status" value="1"/>
</dbReference>
<dbReference type="SUPFAM" id="SSF55931">
    <property type="entry name" value="Glutamine synthetase/guanido kinase"/>
    <property type="match status" value="1"/>
</dbReference>
<dbReference type="PROSITE" id="PS00180">
    <property type="entry name" value="GLNA_1"/>
    <property type="match status" value="1"/>
</dbReference>
<dbReference type="PROSITE" id="PS00181">
    <property type="entry name" value="GLNA_ATP"/>
    <property type="match status" value="1"/>
</dbReference>
<dbReference type="PROSITE" id="PS51986">
    <property type="entry name" value="GS_BETA_GRASP"/>
    <property type="match status" value="1"/>
</dbReference>
<dbReference type="PROSITE" id="PS51987">
    <property type="entry name" value="GS_CATALYTIC"/>
    <property type="match status" value="1"/>
</dbReference>
<keyword id="KW-0067">ATP-binding</keyword>
<keyword id="KW-0963">Cytoplasm</keyword>
<keyword id="KW-0903">Direct protein sequencing</keyword>
<keyword id="KW-0436">Ligase</keyword>
<keyword id="KW-0547">Nucleotide-binding</keyword>
<keyword id="KW-1185">Reference proteome</keyword>
<feature type="chain" id="PRO_0000153187" description="Glutamine synthetase cytosolic isozyme 1-1">
    <location>
        <begin position="1"/>
        <end position="356"/>
    </location>
</feature>
<feature type="domain" description="GS beta-grasp" evidence="2">
    <location>
        <begin position="19"/>
        <end position="99"/>
    </location>
</feature>
<feature type="domain" description="GS catalytic" evidence="3">
    <location>
        <begin position="106"/>
        <end position="356"/>
    </location>
</feature>
<sequence>MASLTDLVNLNLSDTTEKIIAEYIWIGGSGMDLRSKARTLSGPVTDPSKLPKWNYDGSSTGQAPGEDSEVILYPQAIFKDPFRKGNNILVMCDCYTPAGEPIPTNKRHNAAKIFSSPEVASEEPWYGIEQEYTLLQKDINWPLGWPVGGFPGPQGPYYCGIGADKSFGRDIVDSHYKACLYAGINISGINGEVMPGQWEFQVGPSVGISAGDQVWVARYILERITEIAGVVVSFDPKPIPGDWNGAGAHTNYSTKSMRNDGGYEIIKSAIEKLKLRHKEHISAYGEGNERRLTGRHETADINTFSWGVANRGASVRVGRETEQNGKGYFEDRRPASNMDPYIVTSMIAETTIIWKP</sequence>